<reference key="1">
    <citation type="journal article" date="1996" name="Nucleic Acids Res.">
        <title>Complete sequence analysis of the genome of the bacterium Mycoplasma pneumoniae.</title>
        <authorList>
            <person name="Himmelreich R."/>
            <person name="Hilbert H."/>
            <person name="Plagens H."/>
            <person name="Pirkl E."/>
            <person name="Li B.-C."/>
            <person name="Herrmann R."/>
        </authorList>
    </citation>
    <scope>NUCLEOTIDE SEQUENCE [LARGE SCALE GENOMIC DNA]</scope>
    <source>
        <strain>ATCC 29342 / M129 / Subtype 1</strain>
    </source>
</reference>
<proteinExistence type="predicted"/>
<gene>
    <name type="ordered locus">MPN_525</name>
    <name type="ORF">G12_orf413</name>
    <name type="ORF">MP317</name>
</gene>
<keyword id="KW-1185">Reference proteome</keyword>
<feature type="chain" id="PRO_0000210554" description="Uncharacterized protein MG349 homolog">
    <location>
        <begin position="1"/>
        <end position="413"/>
    </location>
</feature>
<dbReference type="EMBL" id="U00089">
    <property type="protein sequence ID" value="AAB95965.1"/>
    <property type="molecule type" value="Genomic_DNA"/>
</dbReference>
<dbReference type="PIR" id="S73643">
    <property type="entry name" value="S73643"/>
</dbReference>
<dbReference type="RefSeq" id="NP_110213.1">
    <property type="nucleotide sequence ID" value="NC_000912.1"/>
</dbReference>
<dbReference type="RefSeq" id="WP_010874881.1">
    <property type="nucleotide sequence ID" value="NZ_OU342337.1"/>
</dbReference>
<dbReference type="SMR" id="P75253"/>
<dbReference type="STRING" id="272634.MPN_525"/>
<dbReference type="EnsemblBacteria" id="AAB95965">
    <property type="protein sequence ID" value="AAB95965"/>
    <property type="gene ID" value="MPN_525"/>
</dbReference>
<dbReference type="KEGG" id="mpn:MPN_525"/>
<dbReference type="PATRIC" id="fig|272634.6.peg.584"/>
<dbReference type="HOGENOM" id="CLU_681179_0_0_14"/>
<dbReference type="OrthoDB" id="395744at2"/>
<dbReference type="BioCyc" id="MPNE272634:G1GJ3-866-MONOMER"/>
<dbReference type="Proteomes" id="UP000000808">
    <property type="component" value="Chromosome"/>
</dbReference>
<sequence>MQPNYYRVIKKATSFSGLDMISHAYGQIAGVEVVGFYLWLITEANAQAFNSEIRTPISRLQNAFNTTGTKNVNVPDWIYKTIGKLESLGLVRTFFSQEKSEMTFWIVEPLGWKEFNQKKHFKEKLIESMGKLEYDRNCLSFEQIDNIQFDNALEITANFEANFTSKQDCLSFSFDFEAFHKQLVKQNLFVSFNQKTKAVINGYFEKYQITLEGILECVIPSVVNDEVDLELLQKLLEQLVKNNTAPIVDTVINDRNFFYDNQNLATETKDAISRCHLEYNAEKYLFLLYGKVENEQLDLIRRLRQEFGIADKVINLIVDFSFWKNNSMWREQYILKIAESVERYRSHNNYQATLDNFIRASSLAKKQRTKTKIEKSEPETSAAPVNETDDVNYFLNRIKAINKKNRENGKHKR</sequence>
<accession>P75253</accession>
<name>Y525_MYCPN</name>
<protein>
    <recommendedName>
        <fullName>Uncharacterized protein MG349 homolog</fullName>
    </recommendedName>
</protein>
<organism>
    <name type="scientific">Mycoplasma pneumoniae (strain ATCC 29342 / M129 / Subtype 1)</name>
    <name type="common">Mycoplasmoides pneumoniae</name>
    <dbReference type="NCBI Taxonomy" id="272634"/>
    <lineage>
        <taxon>Bacteria</taxon>
        <taxon>Bacillati</taxon>
        <taxon>Mycoplasmatota</taxon>
        <taxon>Mycoplasmoidales</taxon>
        <taxon>Mycoplasmoidaceae</taxon>
        <taxon>Mycoplasmoides</taxon>
    </lineage>
</organism>